<sequence length="867" mass="95075">MIKSTNEIRQGFRDFFVNKGHQSVSTGSLVPHDDPTLLFTNAGMNQFKDTYLGTEKRAYTRATSSQCCVRAGGKHNDLDNVGYTARHHTFFEMLGNFSFGDYFKREAIGFAWEYLTVELGLPKDKLWVTVFDEDLEAEKIWIEEIGVDPKCVLRIGAKDNFWSMGDTGPCGPCSEIFYDHGEDVWGGPPGTAEEDGDRFIEIWNIVFMQYNRHADGTMENLPKPSVDTGMGLERISAIMQNCHSNYEIDLFQGLIKKVAEVTGASDLEDKSLRVVADHIRSCGFLICDGVMPSNEGRGYVLRRIIRRAVRHGHKLGAKDIFFFKIYDELINQMGDAYPELSKQRLFVEKILRREEEQFAKTLDRGLQILDNELDHLEGQVIPGDVVFKLYDTFGFPADLTADIARERGLTIDEAGFDKAMAEQRKRAQQANNFGIDYNKTLIIDQKTEFIGYETLQGAATVTHLVVEGAFVNALKEGDSGQVILSATPFYAEAGGQSGDAGKLILNNGVFVVTDTKKSGDAFVHSGYVGMGSVKVNDKVHAEVDTARRQSIALHHSATHLLHAALRKTLGEHVTQKGSLVDADKLRFDFSHFEALSADSLSEVTFLVNEAIRNNYEVVTKLMDIEEAKSSNAMALFGEKYDEMVRVVQMGDFSTELCGGTHAKRTGDLGLFLIRSESGIAAGVRRIEATVGSAADQVISELLYEVDKACGLVRGDHVNLGEKIEQLVDRSKLLEKEVAELKAKIASAAGANLIDNAIEINGVKVVIANIEGIDPKLLRDSVDQMKNKMQSGIVVLATVAADDKVSLIAGVSKDLIKKVKAGELVNLVAGPVGGKGGGRPDMAMAGGNNPAALADALALVAPWLSERL</sequence>
<evidence type="ECO:0000255" key="1">
    <source>
        <dbReference type="HAMAP-Rule" id="MF_00036"/>
    </source>
</evidence>
<gene>
    <name evidence="1" type="primary">alaS</name>
    <name type="ordered locus">Ping_3380</name>
</gene>
<protein>
    <recommendedName>
        <fullName evidence="1">Alanine--tRNA ligase</fullName>
        <ecNumber evidence="1">6.1.1.7</ecNumber>
    </recommendedName>
    <alternativeName>
        <fullName evidence="1">Alanyl-tRNA synthetase</fullName>
        <shortName evidence="1">AlaRS</shortName>
    </alternativeName>
</protein>
<organism>
    <name type="scientific">Psychromonas ingrahamii (strain DSM 17664 / CCUG 51855 / 37)</name>
    <dbReference type="NCBI Taxonomy" id="357804"/>
    <lineage>
        <taxon>Bacteria</taxon>
        <taxon>Pseudomonadati</taxon>
        <taxon>Pseudomonadota</taxon>
        <taxon>Gammaproteobacteria</taxon>
        <taxon>Alteromonadales</taxon>
        <taxon>Psychromonadaceae</taxon>
        <taxon>Psychromonas</taxon>
    </lineage>
</organism>
<accession>A1T001</accession>
<proteinExistence type="inferred from homology"/>
<feature type="chain" id="PRO_0000347746" description="Alanine--tRNA ligase">
    <location>
        <begin position="1"/>
        <end position="867"/>
    </location>
</feature>
<feature type="binding site" evidence="1">
    <location>
        <position position="555"/>
    </location>
    <ligand>
        <name>Zn(2+)</name>
        <dbReference type="ChEBI" id="CHEBI:29105"/>
    </ligand>
</feature>
<feature type="binding site" evidence="1">
    <location>
        <position position="559"/>
    </location>
    <ligand>
        <name>Zn(2+)</name>
        <dbReference type="ChEBI" id="CHEBI:29105"/>
    </ligand>
</feature>
<feature type="binding site" evidence="1">
    <location>
        <position position="657"/>
    </location>
    <ligand>
        <name>Zn(2+)</name>
        <dbReference type="ChEBI" id="CHEBI:29105"/>
    </ligand>
</feature>
<feature type="binding site" evidence="1">
    <location>
        <position position="661"/>
    </location>
    <ligand>
        <name>Zn(2+)</name>
        <dbReference type="ChEBI" id="CHEBI:29105"/>
    </ligand>
</feature>
<keyword id="KW-0030">Aminoacyl-tRNA synthetase</keyword>
<keyword id="KW-0067">ATP-binding</keyword>
<keyword id="KW-0963">Cytoplasm</keyword>
<keyword id="KW-0436">Ligase</keyword>
<keyword id="KW-0479">Metal-binding</keyword>
<keyword id="KW-0547">Nucleotide-binding</keyword>
<keyword id="KW-0648">Protein biosynthesis</keyword>
<keyword id="KW-1185">Reference proteome</keyword>
<keyword id="KW-0694">RNA-binding</keyword>
<keyword id="KW-0820">tRNA-binding</keyword>
<keyword id="KW-0862">Zinc</keyword>
<reference key="1">
    <citation type="journal article" date="2008" name="BMC Genomics">
        <title>Genomics of an extreme psychrophile, Psychromonas ingrahamii.</title>
        <authorList>
            <person name="Riley M."/>
            <person name="Staley J.T."/>
            <person name="Danchin A."/>
            <person name="Wang T.Z."/>
            <person name="Brettin T.S."/>
            <person name="Hauser L.J."/>
            <person name="Land M.L."/>
            <person name="Thompson L.S."/>
        </authorList>
    </citation>
    <scope>NUCLEOTIDE SEQUENCE [LARGE SCALE GENOMIC DNA]</scope>
    <source>
        <strain>DSM 17664 / CCUG 51855 / 37</strain>
    </source>
</reference>
<comment type="function">
    <text evidence="1">Catalyzes the attachment of alanine to tRNA(Ala) in a two-step reaction: alanine is first activated by ATP to form Ala-AMP and then transferred to the acceptor end of tRNA(Ala). Also edits incorrectly charged Ser-tRNA(Ala) and Gly-tRNA(Ala) via its editing domain.</text>
</comment>
<comment type="catalytic activity">
    <reaction evidence="1">
        <text>tRNA(Ala) + L-alanine + ATP = L-alanyl-tRNA(Ala) + AMP + diphosphate</text>
        <dbReference type="Rhea" id="RHEA:12540"/>
        <dbReference type="Rhea" id="RHEA-COMP:9657"/>
        <dbReference type="Rhea" id="RHEA-COMP:9923"/>
        <dbReference type="ChEBI" id="CHEBI:30616"/>
        <dbReference type="ChEBI" id="CHEBI:33019"/>
        <dbReference type="ChEBI" id="CHEBI:57972"/>
        <dbReference type="ChEBI" id="CHEBI:78442"/>
        <dbReference type="ChEBI" id="CHEBI:78497"/>
        <dbReference type="ChEBI" id="CHEBI:456215"/>
        <dbReference type="EC" id="6.1.1.7"/>
    </reaction>
</comment>
<comment type="cofactor">
    <cofactor evidence="1">
        <name>Zn(2+)</name>
        <dbReference type="ChEBI" id="CHEBI:29105"/>
    </cofactor>
    <text evidence="1">Binds 1 zinc ion per subunit.</text>
</comment>
<comment type="subcellular location">
    <subcellularLocation>
        <location evidence="1">Cytoplasm</location>
    </subcellularLocation>
</comment>
<comment type="domain">
    <text evidence="1">Consists of three domains; the N-terminal catalytic domain, the editing domain and the C-terminal C-Ala domain. The editing domain removes incorrectly charged amino acids, while the C-Ala domain, along with tRNA(Ala), serves as a bridge to cooperatively bring together the editing and aminoacylation centers thus stimulating deacylation of misacylated tRNAs.</text>
</comment>
<comment type="similarity">
    <text evidence="1">Belongs to the class-II aminoacyl-tRNA synthetase family.</text>
</comment>
<dbReference type="EC" id="6.1.1.7" evidence="1"/>
<dbReference type="EMBL" id="CP000510">
    <property type="protein sequence ID" value="ABM05066.1"/>
    <property type="molecule type" value="Genomic_DNA"/>
</dbReference>
<dbReference type="RefSeq" id="WP_011771618.1">
    <property type="nucleotide sequence ID" value="NC_008709.1"/>
</dbReference>
<dbReference type="SMR" id="A1T001"/>
<dbReference type="STRING" id="357804.Ping_3380"/>
<dbReference type="KEGG" id="pin:Ping_3380"/>
<dbReference type="eggNOG" id="COG0013">
    <property type="taxonomic scope" value="Bacteria"/>
</dbReference>
<dbReference type="HOGENOM" id="CLU_004485_1_1_6"/>
<dbReference type="OrthoDB" id="9803884at2"/>
<dbReference type="Proteomes" id="UP000000639">
    <property type="component" value="Chromosome"/>
</dbReference>
<dbReference type="GO" id="GO:0005829">
    <property type="term" value="C:cytosol"/>
    <property type="evidence" value="ECO:0007669"/>
    <property type="project" value="TreeGrafter"/>
</dbReference>
<dbReference type="GO" id="GO:0004813">
    <property type="term" value="F:alanine-tRNA ligase activity"/>
    <property type="evidence" value="ECO:0007669"/>
    <property type="project" value="UniProtKB-UniRule"/>
</dbReference>
<dbReference type="GO" id="GO:0002161">
    <property type="term" value="F:aminoacyl-tRNA deacylase activity"/>
    <property type="evidence" value="ECO:0007669"/>
    <property type="project" value="TreeGrafter"/>
</dbReference>
<dbReference type="GO" id="GO:0005524">
    <property type="term" value="F:ATP binding"/>
    <property type="evidence" value="ECO:0007669"/>
    <property type="project" value="UniProtKB-UniRule"/>
</dbReference>
<dbReference type="GO" id="GO:0000049">
    <property type="term" value="F:tRNA binding"/>
    <property type="evidence" value="ECO:0007669"/>
    <property type="project" value="UniProtKB-KW"/>
</dbReference>
<dbReference type="GO" id="GO:0008270">
    <property type="term" value="F:zinc ion binding"/>
    <property type="evidence" value="ECO:0007669"/>
    <property type="project" value="UniProtKB-UniRule"/>
</dbReference>
<dbReference type="GO" id="GO:0006419">
    <property type="term" value="P:alanyl-tRNA aminoacylation"/>
    <property type="evidence" value="ECO:0007669"/>
    <property type="project" value="UniProtKB-UniRule"/>
</dbReference>
<dbReference type="GO" id="GO:0045892">
    <property type="term" value="P:negative regulation of DNA-templated transcription"/>
    <property type="evidence" value="ECO:0007669"/>
    <property type="project" value="TreeGrafter"/>
</dbReference>
<dbReference type="CDD" id="cd00673">
    <property type="entry name" value="AlaRS_core"/>
    <property type="match status" value="1"/>
</dbReference>
<dbReference type="FunFam" id="2.40.30.130:FF:000001">
    <property type="entry name" value="Alanine--tRNA ligase"/>
    <property type="match status" value="1"/>
</dbReference>
<dbReference type="FunFam" id="3.10.310.40:FF:000001">
    <property type="entry name" value="Alanine--tRNA ligase"/>
    <property type="match status" value="1"/>
</dbReference>
<dbReference type="FunFam" id="3.30.54.20:FF:000001">
    <property type="entry name" value="Alanine--tRNA ligase"/>
    <property type="match status" value="1"/>
</dbReference>
<dbReference type="FunFam" id="3.30.930.10:FF:000004">
    <property type="entry name" value="Alanine--tRNA ligase"/>
    <property type="match status" value="1"/>
</dbReference>
<dbReference type="FunFam" id="3.30.980.10:FF:000004">
    <property type="entry name" value="Alanine--tRNA ligase, cytoplasmic"/>
    <property type="match status" value="1"/>
</dbReference>
<dbReference type="Gene3D" id="2.40.30.130">
    <property type="match status" value="1"/>
</dbReference>
<dbReference type="Gene3D" id="3.10.310.40">
    <property type="match status" value="1"/>
</dbReference>
<dbReference type="Gene3D" id="3.30.54.20">
    <property type="match status" value="1"/>
</dbReference>
<dbReference type="Gene3D" id="3.30.930.10">
    <property type="entry name" value="Bira Bifunctional Protein, Domain 2"/>
    <property type="match status" value="1"/>
</dbReference>
<dbReference type="Gene3D" id="3.30.980.10">
    <property type="entry name" value="Threonyl-trna Synthetase, Chain A, domain 2"/>
    <property type="match status" value="1"/>
</dbReference>
<dbReference type="HAMAP" id="MF_00036_B">
    <property type="entry name" value="Ala_tRNA_synth_B"/>
    <property type="match status" value="1"/>
</dbReference>
<dbReference type="InterPro" id="IPR045864">
    <property type="entry name" value="aa-tRNA-synth_II/BPL/LPL"/>
</dbReference>
<dbReference type="InterPro" id="IPR002318">
    <property type="entry name" value="Ala-tRNA-lgiase_IIc"/>
</dbReference>
<dbReference type="InterPro" id="IPR018162">
    <property type="entry name" value="Ala-tRNA-ligase_IIc_anticod-bd"/>
</dbReference>
<dbReference type="InterPro" id="IPR018165">
    <property type="entry name" value="Ala-tRNA-synth_IIc_core"/>
</dbReference>
<dbReference type="InterPro" id="IPR018164">
    <property type="entry name" value="Ala-tRNA-synth_IIc_N"/>
</dbReference>
<dbReference type="InterPro" id="IPR050058">
    <property type="entry name" value="Ala-tRNA_ligase"/>
</dbReference>
<dbReference type="InterPro" id="IPR023033">
    <property type="entry name" value="Ala_tRNA_ligase_euk/bac"/>
</dbReference>
<dbReference type="InterPro" id="IPR003156">
    <property type="entry name" value="DHHA1_dom"/>
</dbReference>
<dbReference type="InterPro" id="IPR018163">
    <property type="entry name" value="Thr/Ala-tRNA-synth_IIc_edit"/>
</dbReference>
<dbReference type="InterPro" id="IPR009000">
    <property type="entry name" value="Transl_B-barrel_sf"/>
</dbReference>
<dbReference type="InterPro" id="IPR012947">
    <property type="entry name" value="tRNA_SAD"/>
</dbReference>
<dbReference type="NCBIfam" id="TIGR00344">
    <property type="entry name" value="alaS"/>
    <property type="match status" value="1"/>
</dbReference>
<dbReference type="PANTHER" id="PTHR11777:SF9">
    <property type="entry name" value="ALANINE--TRNA LIGASE, CYTOPLASMIC"/>
    <property type="match status" value="1"/>
</dbReference>
<dbReference type="PANTHER" id="PTHR11777">
    <property type="entry name" value="ALANYL-TRNA SYNTHETASE"/>
    <property type="match status" value="1"/>
</dbReference>
<dbReference type="Pfam" id="PF02272">
    <property type="entry name" value="DHHA1"/>
    <property type="match status" value="1"/>
</dbReference>
<dbReference type="Pfam" id="PF01411">
    <property type="entry name" value="tRNA-synt_2c"/>
    <property type="match status" value="1"/>
</dbReference>
<dbReference type="Pfam" id="PF07973">
    <property type="entry name" value="tRNA_SAD"/>
    <property type="match status" value="1"/>
</dbReference>
<dbReference type="PRINTS" id="PR00980">
    <property type="entry name" value="TRNASYNTHALA"/>
</dbReference>
<dbReference type="SMART" id="SM00863">
    <property type="entry name" value="tRNA_SAD"/>
    <property type="match status" value="1"/>
</dbReference>
<dbReference type="SUPFAM" id="SSF55681">
    <property type="entry name" value="Class II aaRS and biotin synthetases"/>
    <property type="match status" value="1"/>
</dbReference>
<dbReference type="SUPFAM" id="SSF101353">
    <property type="entry name" value="Putative anticodon-binding domain of alanyl-tRNA synthetase (AlaRS)"/>
    <property type="match status" value="1"/>
</dbReference>
<dbReference type="SUPFAM" id="SSF55186">
    <property type="entry name" value="ThrRS/AlaRS common domain"/>
    <property type="match status" value="1"/>
</dbReference>
<dbReference type="SUPFAM" id="SSF50447">
    <property type="entry name" value="Translation proteins"/>
    <property type="match status" value="1"/>
</dbReference>
<dbReference type="PROSITE" id="PS50860">
    <property type="entry name" value="AA_TRNA_LIGASE_II_ALA"/>
    <property type="match status" value="1"/>
</dbReference>
<name>SYA_PSYIN</name>